<gene>
    <name evidence="2" type="primary">ftsL</name>
    <name type="ordered locus">GSU3076</name>
</gene>
<dbReference type="EMBL" id="AE017180">
    <property type="protein sequence ID" value="AAR36467.1"/>
    <property type="molecule type" value="Genomic_DNA"/>
</dbReference>
<dbReference type="RefSeq" id="NP_954117.1">
    <property type="nucleotide sequence ID" value="NC_002939.5"/>
</dbReference>
<dbReference type="RefSeq" id="WP_010943701.1">
    <property type="nucleotide sequence ID" value="NC_002939.5"/>
</dbReference>
<dbReference type="SMR" id="Q748D0"/>
<dbReference type="STRING" id="243231.GSU3076"/>
<dbReference type="EnsemblBacteria" id="AAR36467">
    <property type="protein sequence ID" value="AAR36467"/>
    <property type="gene ID" value="GSU3076"/>
</dbReference>
<dbReference type="KEGG" id="gsu:GSU3076"/>
<dbReference type="PATRIC" id="fig|243231.5.peg.3100"/>
<dbReference type="eggNOG" id="COG3116">
    <property type="taxonomic scope" value="Bacteria"/>
</dbReference>
<dbReference type="HOGENOM" id="CLU_172456_0_0_7"/>
<dbReference type="InParanoid" id="Q748D0"/>
<dbReference type="OrthoDB" id="5520672at2"/>
<dbReference type="Proteomes" id="UP000000577">
    <property type="component" value="Chromosome"/>
</dbReference>
<dbReference type="GO" id="GO:0005886">
    <property type="term" value="C:plasma membrane"/>
    <property type="evidence" value="ECO:0007669"/>
    <property type="project" value="UniProtKB-SubCell"/>
</dbReference>
<dbReference type="GO" id="GO:0051301">
    <property type="term" value="P:cell division"/>
    <property type="evidence" value="ECO:0007669"/>
    <property type="project" value="UniProtKB-KW"/>
</dbReference>
<dbReference type="HAMAP" id="MF_00910">
    <property type="entry name" value="FtsL"/>
    <property type="match status" value="1"/>
</dbReference>
<dbReference type="InterPro" id="IPR011922">
    <property type="entry name" value="Cell_div_FtsL"/>
</dbReference>
<dbReference type="InterPro" id="IPR007060">
    <property type="entry name" value="FtsL/DivIC"/>
</dbReference>
<dbReference type="NCBIfam" id="TIGR02209">
    <property type="entry name" value="ftsL_broad"/>
    <property type="match status" value="1"/>
</dbReference>
<dbReference type="Pfam" id="PF04977">
    <property type="entry name" value="DivIC"/>
    <property type="match status" value="1"/>
</dbReference>
<protein>
    <recommendedName>
        <fullName evidence="2">Cell division protein FtsL</fullName>
    </recommendedName>
</protein>
<feature type="chain" id="PRO_0000414558" description="Cell division protein FtsL">
    <location>
        <begin position="1"/>
        <end position="111"/>
    </location>
</feature>
<feature type="topological domain" description="Cytoplasmic" evidence="2">
    <location>
        <begin position="1"/>
        <end position="26"/>
    </location>
</feature>
<feature type="transmembrane region" description="Helical" evidence="2">
    <location>
        <begin position="27"/>
        <end position="47"/>
    </location>
</feature>
<feature type="topological domain" description="Periplasmic" evidence="2">
    <location>
        <begin position="48"/>
        <end position="111"/>
    </location>
</feature>
<feature type="coiled-coil region" evidence="1">
    <location>
        <begin position="51"/>
        <end position="85"/>
    </location>
</feature>
<accession>Q748D0</accession>
<sequence length="111" mass="12427">MAQARTEFSKVAAPRKLEEMYAQRGDLFPYLLAVLVLLTLVSVFHVWSRVRVVDLNLEVAEVARQLKVAQEEQNRLKLEVASLKTPARIEAVAKGELGMALPTDQQVVVVK</sequence>
<proteinExistence type="inferred from homology"/>
<evidence type="ECO:0000255" key="1"/>
<evidence type="ECO:0000255" key="2">
    <source>
        <dbReference type="HAMAP-Rule" id="MF_00910"/>
    </source>
</evidence>
<name>FTSL_GEOSL</name>
<comment type="function">
    <text evidence="2">Essential cell division protein.</text>
</comment>
<comment type="subcellular location">
    <subcellularLocation>
        <location evidence="2">Cell inner membrane</location>
        <topology evidence="2">Single-pass type II membrane protein</topology>
    </subcellularLocation>
    <text evidence="2">Localizes to the division septum where it forms a ring structure.</text>
</comment>
<comment type="similarity">
    <text evidence="2">Belongs to the FtsL family.</text>
</comment>
<keyword id="KW-0131">Cell cycle</keyword>
<keyword id="KW-0132">Cell division</keyword>
<keyword id="KW-0997">Cell inner membrane</keyword>
<keyword id="KW-1003">Cell membrane</keyword>
<keyword id="KW-0175">Coiled coil</keyword>
<keyword id="KW-0472">Membrane</keyword>
<keyword id="KW-1185">Reference proteome</keyword>
<keyword id="KW-0812">Transmembrane</keyword>
<keyword id="KW-1133">Transmembrane helix</keyword>
<reference key="1">
    <citation type="journal article" date="2003" name="Science">
        <title>Genome of Geobacter sulfurreducens: metal reduction in subsurface environments.</title>
        <authorList>
            <person name="Methe B.A."/>
            <person name="Nelson K.E."/>
            <person name="Eisen J.A."/>
            <person name="Paulsen I.T."/>
            <person name="Nelson W.C."/>
            <person name="Heidelberg J.F."/>
            <person name="Wu D."/>
            <person name="Wu M."/>
            <person name="Ward N.L."/>
            <person name="Beanan M.J."/>
            <person name="Dodson R.J."/>
            <person name="Madupu R."/>
            <person name="Brinkac L.M."/>
            <person name="Daugherty S.C."/>
            <person name="DeBoy R.T."/>
            <person name="Durkin A.S."/>
            <person name="Gwinn M.L."/>
            <person name="Kolonay J.F."/>
            <person name="Sullivan S.A."/>
            <person name="Haft D.H."/>
            <person name="Selengut J."/>
            <person name="Davidsen T.M."/>
            <person name="Zafar N."/>
            <person name="White O."/>
            <person name="Tran B."/>
            <person name="Romero C."/>
            <person name="Forberger H.A."/>
            <person name="Weidman J.F."/>
            <person name="Khouri H.M."/>
            <person name="Feldblyum T.V."/>
            <person name="Utterback T.R."/>
            <person name="Van Aken S.E."/>
            <person name="Lovley D.R."/>
            <person name="Fraser C.M."/>
        </authorList>
    </citation>
    <scope>NUCLEOTIDE SEQUENCE [LARGE SCALE GENOMIC DNA]</scope>
    <source>
        <strain>ATCC 51573 / DSM 12127 / PCA</strain>
    </source>
</reference>
<organism>
    <name type="scientific">Geobacter sulfurreducens (strain ATCC 51573 / DSM 12127 / PCA)</name>
    <dbReference type="NCBI Taxonomy" id="243231"/>
    <lineage>
        <taxon>Bacteria</taxon>
        <taxon>Pseudomonadati</taxon>
        <taxon>Thermodesulfobacteriota</taxon>
        <taxon>Desulfuromonadia</taxon>
        <taxon>Geobacterales</taxon>
        <taxon>Geobacteraceae</taxon>
        <taxon>Geobacter</taxon>
    </lineage>
</organism>